<comment type="function">
    <text evidence="1">Plays a major role in RD1-associated pathogenesis, and may contribute to the establishment and maintenance of M.tuberculosis infection. Together with PPE68, stimulates the secretion of IL-10 and MCP-1 from human macrophages, via the interaction with human Toll-like receptor 2 (TLR2).</text>
</comment>
<comment type="subunit">
    <text evidence="1">Interacts with PPE68. PE35/PPE68 complex interacts with human TLR2.</text>
</comment>
<comment type="subcellular location">
    <subcellularLocation>
        <location evidence="1">Secreted</location>
    </subcellularLocation>
    <subcellularLocation>
        <location evidence="1">Cell surface</location>
    </subcellularLocation>
</comment>
<comment type="similarity">
    <text evidence="3">Belongs to the mycobacterial PE family.</text>
</comment>
<comment type="sequence caution" evidence="3">
    <conflict type="erroneous initiation">
        <sequence resource="EMBL-CDS" id="AAK48354"/>
    </conflict>
    <text>Extended N-terminus.</text>
</comment>
<gene>
    <name type="primary">PE35</name>
    <name type="ordered locus">MT3986</name>
</gene>
<organism>
    <name type="scientific">Mycobacterium tuberculosis (strain CDC 1551 / Oshkosh)</name>
    <dbReference type="NCBI Taxonomy" id="83331"/>
    <lineage>
        <taxon>Bacteria</taxon>
        <taxon>Bacillati</taxon>
        <taxon>Actinomycetota</taxon>
        <taxon>Actinomycetes</taxon>
        <taxon>Mycobacteriales</taxon>
        <taxon>Mycobacteriaceae</taxon>
        <taxon>Mycobacterium</taxon>
        <taxon>Mycobacterium tuberculosis complex</taxon>
    </lineage>
</organism>
<evidence type="ECO:0000250" key="1">
    <source>
        <dbReference type="UniProtKB" id="P9WIG7"/>
    </source>
</evidence>
<evidence type="ECO:0000255" key="2"/>
<evidence type="ECO:0000305" key="3"/>
<name>PE35_MYCTO</name>
<sequence length="98" mass="9799">MEKMSHDPIAADIGTQVSDNALHGVTAGSTALTSVTGLVPAGADEVSAQAATAFTSEGIQLLASNASAQDQLHRAGEAVQDVARTYSQIDDGAAGVFA</sequence>
<keyword id="KW-1185">Reference proteome</keyword>
<keyword id="KW-0964">Secreted</keyword>
<keyword id="KW-0843">Virulence</keyword>
<feature type="chain" id="PRO_0000428010" description="PE family immunomodulator PE35">
    <location>
        <begin position="1"/>
        <end position="98"/>
    </location>
</feature>
<feature type="domain" description="PE" evidence="2">
    <location>
        <begin position="1"/>
        <end position="90"/>
    </location>
</feature>
<protein>
    <recommendedName>
        <fullName evidence="1">PE family immunomodulator PE35</fullName>
    </recommendedName>
</protein>
<proteinExistence type="inferred from homology"/>
<reference key="1">
    <citation type="journal article" date="2002" name="J. Bacteriol.">
        <title>Whole-genome comparison of Mycobacterium tuberculosis clinical and laboratory strains.</title>
        <authorList>
            <person name="Fleischmann R.D."/>
            <person name="Alland D."/>
            <person name="Eisen J.A."/>
            <person name="Carpenter L."/>
            <person name="White O."/>
            <person name="Peterson J.D."/>
            <person name="DeBoy R.T."/>
            <person name="Dodson R.J."/>
            <person name="Gwinn M.L."/>
            <person name="Haft D.H."/>
            <person name="Hickey E.K."/>
            <person name="Kolonay J.F."/>
            <person name="Nelson W.C."/>
            <person name="Umayam L.A."/>
            <person name="Ermolaeva M.D."/>
            <person name="Salzberg S.L."/>
            <person name="Delcher A."/>
            <person name="Utterback T.R."/>
            <person name="Weidman J.F."/>
            <person name="Khouri H.M."/>
            <person name="Gill J."/>
            <person name="Mikula A."/>
            <person name="Bishai W."/>
            <person name="Jacobs W.R. Jr."/>
            <person name="Venter J.C."/>
            <person name="Fraser C.M."/>
        </authorList>
    </citation>
    <scope>NUCLEOTIDE SEQUENCE [LARGE SCALE GENOMIC DNA]</scope>
    <source>
        <strain>CDC 1551 / Oshkosh</strain>
    </source>
</reference>
<accession>P9WIG6</accession>
<accession>L0TGV1</accession>
<accession>Q79F93</accession>
<accession>Q8VIR8</accession>
<dbReference type="EMBL" id="AE000516">
    <property type="protein sequence ID" value="AAK48354.1"/>
    <property type="status" value="ALT_INIT"/>
    <property type="molecule type" value="Genomic_DNA"/>
</dbReference>
<dbReference type="PIR" id="F70802">
    <property type="entry name" value="F70802"/>
</dbReference>
<dbReference type="RefSeq" id="WP_003399870.1">
    <property type="nucleotide sequence ID" value="NZ_KK341227.1"/>
</dbReference>
<dbReference type="SMR" id="P9WIG6"/>
<dbReference type="KEGG" id="mtc:MT3986"/>
<dbReference type="PATRIC" id="fig|83331.31.peg.4288"/>
<dbReference type="HOGENOM" id="CLU_173258_0_0_11"/>
<dbReference type="Proteomes" id="UP000001020">
    <property type="component" value="Chromosome"/>
</dbReference>
<dbReference type="GO" id="GO:0009986">
    <property type="term" value="C:cell surface"/>
    <property type="evidence" value="ECO:0007669"/>
    <property type="project" value="UniProtKB-SubCell"/>
</dbReference>
<dbReference type="GO" id="GO:0005576">
    <property type="term" value="C:extracellular region"/>
    <property type="evidence" value="ECO:0007669"/>
    <property type="project" value="UniProtKB-SubCell"/>
</dbReference>
<dbReference type="Gene3D" id="1.10.287.850">
    <property type="entry name" value="HP0062-like domain"/>
    <property type="match status" value="1"/>
</dbReference>
<dbReference type="InterPro" id="IPR000084">
    <property type="entry name" value="PE-PGRS_N"/>
</dbReference>
<dbReference type="Pfam" id="PF00934">
    <property type="entry name" value="PE"/>
    <property type="match status" value="1"/>
</dbReference>
<dbReference type="SUPFAM" id="SSF140459">
    <property type="entry name" value="PE/PPE dimer-like"/>
    <property type="match status" value="1"/>
</dbReference>